<evidence type="ECO:0000255" key="1">
    <source>
        <dbReference type="HAMAP-Rule" id="MF_00531"/>
    </source>
</evidence>
<evidence type="ECO:0000305" key="2"/>
<dbReference type="EMBL" id="CP000267">
    <property type="protein sequence ID" value="ABD71491.1"/>
    <property type="molecule type" value="Genomic_DNA"/>
</dbReference>
<dbReference type="RefSeq" id="WP_011466054.1">
    <property type="nucleotide sequence ID" value="NC_007908.1"/>
</dbReference>
<dbReference type="SMR" id="Q21RW2"/>
<dbReference type="STRING" id="338969.Rfer_3791"/>
<dbReference type="KEGG" id="rfr:Rfer_3791"/>
<dbReference type="eggNOG" id="COG0185">
    <property type="taxonomic scope" value="Bacteria"/>
</dbReference>
<dbReference type="HOGENOM" id="CLU_144911_0_1_4"/>
<dbReference type="OrthoDB" id="9797833at2"/>
<dbReference type="Proteomes" id="UP000008332">
    <property type="component" value="Chromosome"/>
</dbReference>
<dbReference type="GO" id="GO:0005737">
    <property type="term" value="C:cytoplasm"/>
    <property type="evidence" value="ECO:0007669"/>
    <property type="project" value="UniProtKB-ARBA"/>
</dbReference>
<dbReference type="GO" id="GO:0015935">
    <property type="term" value="C:small ribosomal subunit"/>
    <property type="evidence" value="ECO:0007669"/>
    <property type="project" value="InterPro"/>
</dbReference>
<dbReference type="GO" id="GO:0019843">
    <property type="term" value="F:rRNA binding"/>
    <property type="evidence" value="ECO:0007669"/>
    <property type="project" value="UniProtKB-UniRule"/>
</dbReference>
<dbReference type="GO" id="GO:0003735">
    <property type="term" value="F:structural constituent of ribosome"/>
    <property type="evidence" value="ECO:0007669"/>
    <property type="project" value="InterPro"/>
</dbReference>
<dbReference type="GO" id="GO:0000028">
    <property type="term" value="P:ribosomal small subunit assembly"/>
    <property type="evidence" value="ECO:0007669"/>
    <property type="project" value="TreeGrafter"/>
</dbReference>
<dbReference type="GO" id="GO:0006412">
    <property type="term" value="P:translation"/>
    <property type="evidence" value="ECO:0007669"/>
    <property type="project" value="UniProtKB-UniRule"/>
</dbReference>
<dbReference type="FunFam" id="3.30.860.10:FF:000001">
    <property type="entry name" value="30S ribosomal protein S19"/>
    <property type="match status" value="1"/>
</dbReference>
<dbReference type="Gene3D" id="3.30.860.10">
    <property type="entry name" value="30s Ribosomal Protein S19, Chain A"/>
    <property type="match status" value="1"/>
</dbReference>
<dbReference type="HAMAP" id="MF_00531">
    <property type="entry name" value="Ribosomal_uS19"/>
    <property type="match status" value="1"/>
</dbReference>
<dbReference type="InterPro" id="IPR002222">
    <property type="entry name" value="Ribosomal_uS19"/>
</dbReference>
<dbReference type="InterPro" id="IPR005732">
    <property type="entry name" value="Ribosomal_uS19_bac-type"/>
</dbReference>
<dbReference type="InterPro" id="IPR020934">
    <property type="entry name" value="Ribosomal_uS19_CS"/>
</dbReference>
<dbReference type="InterPro" id="IPR023575">
    <property type="entry name" value="Ribosomal_uS19_SF"/>
</dbReference>
<dbReference type="NCBIfam" id="TIGR01050">
    <property type="entry name" value="rpsS_bact"/>
    <property type="match status" value="1"/>
</dbReference>
<dbReference type="PANTHER" id="PTHR11880">
    <property type="entry name" value="RIBOSOMAL PROTEIN S19P FAMILY MEMBER"/>
    <property type="match status" value="1"/>
</dbReference>
<dbReference type="PANTHER" id="PTHR11880:SF8">
    <property type="entry name" value="SMALL RIBOSOMAL SUBUNIT PROTEIN US19M"/>
    <property type="match status" value="1"/>
</dbReference>
<dbReference type="Pfam" id="PF00203">
    <property type="entry name" value="Ribosomal_S19"/>
    <property type="match status" value="1"/>
</dbReference>
<dbReference type="PIRSF" id="PIRSF002144">
    <property type="entry name" value="Ribosomal_S19"/>
    <property type="match status" value="1"/>
</dbReference>
<dbReference type="PRINTS" id="PR00975">
    <property type="entry name" value="RIBOSOMALS19"/>
</dbReference>
<dbReference type="SUPFAM" id="SSF54570">
    <property type="entry name" value="Ribosomal protein S19"/>
    <property type="match status" value="1"/>
</dbReference>
<dbReference type="PROSITE" id="PS00323">
    <property type="entry name" value="RIBOSOMAL_S19"/>
    <property type="match status" value="1"/>
</dbReference>
<organism>
    <name type="scientific">Albidiferax ferrireducens (strain ATCC BAA-621 / DSM 15236 / T118)</name>
    <name type="common">Rhodoferax ferrireducens</name>
    <dbReference type="NCBI Taxonomy" id="338969"/>
    <lineage>
        <taxon>Bacteria</taxon>
        <taxon>Pseudomonadati</taxon>
        <taxon>Pseudomonadota</taxon>
        <taxon>Betaproteobacteria</taxon>
        <taxon>Burkholderiales</taxon>
        <taxon>Comamonadaceae</taxon>
        <taxon>Rhodoferax</taxon>
    </lineage>
</organism>
<keyword id="KW-1185">Reference proteome</keyword>
<keyword id="KW-0687">Ribonucleoprotein</keyword>
<keyword id="KW-0689">Ribosomal protein</keyword>
<keyword id="KW-0694">RNA-binding</keyword>
<keyword id="KW-0699">rRNA-binding</keyword>
<name>RS19_ALBFT</name>
<comment type="function">
    <text evidence="1">Protein S19 forms a complex with S13 that binds strongly to the 16S ribosomal RNA.</text>
</comment>
<comment type="similarity">
    <text evidence="1">Belongs to the universal ribosomal protein uS19 family.</text>
</comment>
<protein>
    <recommendedName>
        <fullName evidence="1">Small ribosomal subunit protein uS19</fullName>
    </recommendedName>
    <alternativeName>
        <fullName evidence="2">30S ribosomal protein S19</fullName>
    </alternativeName>
</protein>
<proteinExistence type="inferred from homology"/>
<reference key="1">
    <citation type="submission" date="2006-02" db="EMBL/GenBank/DDBJ databases">
        <title>Complete sequence of chromosome of Rhodoferax ferrireducens DSM 15236.</title>
        <authorList>
            <person name="Copeland A."/>
            <person name="Lucas S."/>
            <person name="Lapidus A."/>
            <person name="Barry K."/>
            <person name="Detter J.C."/>
            <person name="Glavina del Rio T."/>
            <person name="Hammon N."/>
            <person name="Israni S."/>
            <person name="Pitluck S."/>
            <person name="Brettin T."/>
            <person name="Bruce D."/>
            <person name="Han C."/>
            <person name="Tapia R."/>
            <person name="Gilna P."/>
            <person name="Kiss H."/>
            <person name="Schmutz J."/>
            <person name="Larimer F."/>
            <person name="Land M."/>
            <person name="Kyrpides N."/>
            <person name="Ivanova N."/>
            <person name="Richardson P."/>
        </authorList>
    </citation>
    <scope>NUCLEOTIDE SEQUENCE [LARGE SCALE GENOMIC DNA]</scope>
    <source>
        <strain>ATCC BAA-621 / DSM 15236 / T118</strain>
    </source>
</reference>
<accession>Q21RW2</accession>
<sequence length="92" mass="10356">MTRSLKKGPFVDHHLVAKADKAVATKDKKPIKTWSRRSMVLPDFIGLTIAVHNGKQHVPVYITDQMVGHKLGEFALTRTFKGHPADKKVQKK</sequence>
<gene>
    <name evidence="1" type="primary">rpsS</name>
    <name type="ordered locus">Rfer_3791</name>
</gene>
<feature type="chain" id="PRO_0000265414" description="Small ribosomal subunit protein uS19">
    <location>
        <begin position="1"/>
        <end position="92"/>
    </location>
</feature>